<feature type="chain" id="PRO_0000427882" description="Anti-sigma factor RshA">
    <location>
        <begin position="1"/>
        <end position="101"/>
    </location>
</feature>
<feature type="region of interest" description="Inhibits SigH sigma factor activity" evidence="1">
    <location>
        <begin position="9"/>
        <end position="15"/>
    </location>
</feature>
<feature type="region of interest" description="Inhibits SigH sigma factor activity" evidence="1">
    <location>
        <begin position="28"/>
        <end position="34"/>
    </location>
</feature>
<feature type="region of interest" description="Inhibits SigH sigma factor activity" evidence="1">
    <location>
        <begin position="38"/>
        <end position="44"/>
    </location>
</feature>
<feature type="binding site" evidence="2">
    <location>
        <position position="23"/>
    </location>
    <ligand>
        <name>iron-sulfur cluster</name>
        <dbReference type="ChEBI" id="CHEBI:30408"/>
    </ligand>
</feature>
<feature type="binding site" evidence="2">
    <location>
        <position position="49"/>
    </location>
    <ligand>
        <name>iron-sulfur cluster</name>
        <dbReference type="ChEBI" id="CHEBI:30408"/>
    </ligand>
</feature>
<feature type="binding site" evidence="1">
    <location>
        <position position="53"/>
    </location>
    <ligand>
        <name>iron-sulfur cluster</name>
        <dbReference type="ChEBI" id="CHEBI:30408"/>
    </ligand>
</feature>
<feature type="binding site" evidence="1">
    <location>
        <position position="56"/>
    </location>
    <ligand>
        <name>iron-sulfur cluster</name>
        <dbReference type="ChEBI" id="CHEBI:30408"/>
    </ligand>
</feature>
<feature type="modified residue" description="Phosphothreonine" evidence="1">
    <location>
        <position position="94"/>
    </location>
</feature>
<reference key="1">
    <citation type="journal article" date="2002" name="J. Bacteriol.">
        <title>Whole-genome comparison of Mycobacterium tuberculosis clinical and laboratory strains.</title>
        <authorList>
            <person name="Fleischmann R.D."/>
            <person name="Alland D."/>
            <person name="Eisen J.A."/>
            <person name="Carpenter L."/>
            <person name="White O."/>
            <person name="Peterson J.D."/>
            <person name="DeBoy R.T."/>
            <person name="Dodson R.J."/>
            <person name="Gwinn M.L."/>
            <person name="Haft D.H."/>
            <person name="Hickey E.K."/>
            <person name="Kolonay J.F."/>
            <person name="Nelson W.C."/>
            <person name="Umayam L.A."/>
            <person name="Ermolaeva M.D."/>
            <person name="Salzberg S.L."/>
            <person name="Delcher A."/>
            <person name="Utterback T.R."/>
            <person name="Weidman J.F."/>
            <person name="Khouri H.M."/>
            <person name="Gill J."/>
            <person name="Mikula A."/>
            <person name="Bishai W."/>
            <person name="Jacobs W.R. Jr."/>
            <person name="Venter J.C."/>
            <person name="Fraser C.M."/>
        </authorList>
    </citation>
    <scope>NUCLEOTIDE SEQUENCE [LARGE SCALE GENOMIC DNA]</scope>
    <source>
        <strain>CDC 1551 / Oshkosh</strain>
    </source>
</reference>
<reference key="2">
    <citation type="journal article" date="2002" name="Proc. Natl. Acad. Sci. U.S.A.">
        <title>Reduced immunopathology and mortality despite tissue persistence in a Mycobacterium tuberculosis mutant lacking alternative sigma factor, SigH.</title>
        <authorList>
            <person name="Kaushal D."/>
            <person name="Schroeder B.G."/>
            <person name="Tyagi S."/>
            <person name="Yoshimatsu T."/>
            <person name="Scott C."/>
            <person name="Ko C."/>
            <person name="Carpenter L."/>
            <person name="Mehrotra J."/>
            <person name="Manabe Y.C."/>
            <person name="Fleischmann R.D."/>
            <person name="Bishai W.R."/>
        </authorList>
    </citation>
    <scope>INDUCTION</scope>
    <source>
        <strain>CDC 1551 / Oshkosh</strain>
    </source>
</reference>
<protein>
    <recommendedName>
        <fullName>Anti-sigma factor RshA</fullName>
    </recommendedName>
    <alternativeName>
        <fullName>Regulator of SigH</fullName>
    </alternativeName>
    <alternativeName>
        <fullName>Sigma-H anti-sigma factor RshA</fullName>
    </alternativeName>
</protein>
<proteinExistence type="evidence at transcript level"/>
<sequence length="101" mass="11290">MSENCGPTDAHADHDDSHGGMGCAEVIAEVWTLLDGECTPETRERLRRHLEACPGCLRHYGLEERIKALIGTKCRGDRAPEGLRERLRLEIRRTTIIRGGP</sequence>
<comment type="function">
    <text evidence="1">An redox-regulated anti-sigma factor for extracytoplasmic function (ECF) sigma factor SigH. ECF sigma factors are held in an inactive form by a cognate anti-sigma factor. RshA and some peptides derived from it inhibit the sigma factor activity of SigH. Probably releases SigH during oxidative stress (By similarity).</text>
</comment>
<comment type="cofactor">
    <cofactor evidence="1">
        <name>iron-sulfur cluster</name>
        <dbReference type="ChEBI" id="CHEBI:30408"/>
    </cofactor>
    <text evidence="1">Binds 1 iron-sulfur cluster per subunit.</text>
</comment>
<comment type="subunit">
    <text evidence="1">Interacts with cognate sigma factor SigH under reducing conditions. Binding inhibits the interaction of SigH with the RNA polymerase catalytic core (By similarity).</text>
</comment>
<comment type="PTM">
    <text evidence="1">Phosphorylated, probably by PknB. Phosphorylation decreases interaction with SigH, leading to increased SigH-mediated transcription (By similarity).</text>
</comment>
<comment type="similarity">
    <text evidence="3">Belongs to the zinc-associated anti-sigma factor (ZAS) superfamily.</text>
</comment>
<gene>
    <name type="primary">rshA</name>
    <name type="ordered locus">MT3318</name>
</gene>
<organism>
    <name type="scientific">Mycobacterium tuberculosis (strain CDC 1551 / Oshkosh)</name>
    <dbReference type="NCBI Taxonomy" id="83331"/>
    <lineage>
        <taxon>Bacteria</taxon>
        <taxon>Bacillati</taxon>
        <taxon>Actinomycetota</taxon>
        <taxon>Actinomycetes</taxon>
        <taxon>Mycobacteriales</taxon>
        <taxon>Mycobacteriaceae</taxon>
        <taxon>Mycobacterium</taxon>
        <taxon>Mycobacterium tuberculosis complex</taxon>
    </lineage>
</organism>
<name>RSHA_MYCTO</name>
<keyword id="KW-0408">Iron</keyword>
<keyword id="KW-0411">Iron-sulfur</keyword>
<keyword id="KW-0479">Metal-binding</keyword>
<keyword id="KW-0597">Phosphoprotein</keyword>
<keyword id="KW-1185">Reference proteome</keyword>
<keyword id="KW-0346">Stress response</keyword>
<keyword id="KW-0804">Transcription</keyword>
<keyword id="KW-0805">Transcription regulation</keyword>
<accession>P9WJ68</accession>
<accession>F2GK95</accession>
<accession>Q6MWZ6</accession>
<accession>Q8VJ46</accession>
<dbReference type="EMBL" id="AE000516">
    <property type="protein sequence ID" value="AAK47660.1"/>
    <property type="molecule type" value="Genomic_DNA"/>
</dbReference>
<dbReference type="SMR" id="P9WJ68"/>
<dbReference type="KEGG" id="mtc:MT3318"/>
<dbReference type="PATRIC" id="fig|83331.31.peg.3573"/>
<dbReference type="HOGENOM" id="CLU_155928_0_1_11"/>
<dbReference type="Proteomes" id="UP000001020">
    <property type="component" value="Chromosome"/>
</dbReference>
<dbReference type="GO" id="GO:0051536">
    <property type="term" value="F:iron-sulfur cluster binding"/>
    <property type="evidence" value="ECO:0007669"/>
    <property type="project" value="UniProtKB-KW"/>
</dbReference>
<dbReference type="GO" id="GO:0046872">
    <property type="term" value="F:metal ion binding"/>
    <property type="evidence" value="ECO:0007669"/>
    <property type="project" value="UniProtKB-KW"/>
</dbReference>
<dbReference type="InterPro" id="IPR024020">
    <property type="entry name" value="Anit_sigma_mycothiol_RsrA"/>
</dbReference>
<dbReference type="InterPro" id="IPR027383">
    <property type="entry name" value="Znf_put"/>
</dbReference>
<dbReference type="NCBIfam" id="TIGR03988">
    <property type="entry name" value="antisig_RsrA"/>
    <property type="match status" value="1"/>
</dbReference>
<dbReference type="Pfam" id="PF13490">
    <property type="entry name" value="zf-HC2"/>
    <property type="match status" value="1"/>
</dbReference>
<evidence type="ECO:0000250" key="1"/>
<evidence type="ECO:0000255" key="2"/>
<evidence type="ECO:0000305" key="3"/>